<protein>
    <recommendedName>
        <fullName evidence="1">Glutamate-1-semialdehyde 2,1-aminomutase</fullName>
        <shortName evidence="1">GSA</shortName>
        <ecNumber evidence="1">5.4.3.8</ecNumber>
    </recommendedName>
    <alternativeName>
        <fullName evidence="1">Glutamate-1-semialdehyde aminotransferase</fullName>
        <shortName evidence="1">GSA-AT</shortName>
    </alternativeName>
</protein>
<evidence type="ECO:0000255" key="1">
    <source>
        <dbReference type="HAMAP-Rule" id="MF_00375"/>
    </source>
</evidence>
<feature type="chain" id="PRO_1000059990" description="Glutamate-1-semialdehyde 2,1-aminomutase">
    <location>
        <begin position="1"/>
        <end position="428"/>
    </location>
</feature>
<feature type="modified residue" description="N6-(pyridoxal phosphate)lysine" evidence="1">
    <location>
        <position position="266"/>
    </location>
</feature>
<keyword id="KW-0963">Cytoplasm</keyword>
<keyword id="KW-0413">Isomerase</keyword>
<keyword id="KW-0627">Porphyrin biosynthesis</keyword>
<keyword id="KW-0663">Pyridoxal phosphate</keyword>
<keyword id="KW-1185">Reference proteome</keyword>
<proteinExistence type="inferred from homology"/>
<gene>
    <name evidence="1" type="primary">hemL</name>
    <name type="ordered locus">HEAR2750</name>
</gene>
<comment type="catalytic activity">
    <reaction evidence="1">
        <text>(S)-4-amino-5-oxopentanoate = 5-aminolevulinate</text>
        <dbReference type="Rhea" id="RHEA:14265"/>
        <dbReference type="ChEBI" id="CHEBI:57501"/>
        <dbReference type="ChEBI" id="CHEBI:356416"/>
        <dbReference type="EC" id="5.4.3.8"/>
    </reaction>
</comment>
<comment type="cofactor">
    <cofactor evidence="1">
        <name>pyridoxal 5'-phosphate</name>
        <dbReference type="ChEBI" id="CHEBI:597326"/>
    </cofactor>
</comment>
<comment type="pathway">
    <text evidence="1">Porphyrin-containing compound metabolism; protoporphyrin-IX biosynthesis; 5-aminolevulinate from L-glutamyl-tRNA(Glu): step 2/2.</text>
</comment>
<comment type="subunit">
    <text evidence="1">Homodimer.</text>
</comment>
<comment type="subcellular location">
    <subcellularLocation>
        <location evidence="1">Cytoplasm</location>
    </subcellularLocation>
</comment>
<comment type="similarity">
    <text evidence="1">Belongs to the class-III pyridoxal-phosphate-dependent aminotransferase family. HemL subfamily.</text>
</comment>
<accession>A4G8N0</accession>
<dbReference type="EC" id="5.4.3.8" evidence="1"/>
<dbReference type="EMBL" id="CU207211">
    <property type="protein sequence ID" value="CAL62867.1"/>
    <property type="molecule type" value="Genomic_DNA"/>
</dbReference>
<dbReference type="SMR" id="A4G8N0"/>
<dbReference type="STRING" id="204773.HEAR2750"/>
<dbReference type="KEGG" id="har:HEAR2750"/>
<dbReference type="eggNOG" id="COG0001">
    <property type="taxonomic scope" value="Bacteria"/>
</dbReference>
<dbReference type="HOGENOM" id="CLU_016922_1_5_4"/>
<dbReference type="OrthoDB" id="3398487at2"/>
<dbReference type="UniPathway" id="UPA00251">
    <property type="reaction ID" value="UER00317"/>
</dbReference>
<dbReference type="Proteomes" id="UP000006697">
    <property type="component" value="Chromosome"/>
</dbReference>
<dbReference type="GO" id="GO:0005737">
    <property type="term" value="C:cytoplasm"/>
    <property type="evidence" value="ECO:0007669"/>
    <property type="project" value="UniProtKB-SubCell"/>
</dbReference>
<dbReference type="GO" id="GO:0042286">
    <property type="term" value="F:glutamate-1-semialdehyde 2,1-aminomutase activity"/>
    <property type="evidence" value="ECO:0007669"/>
    <property type="project" value="UniProtKB-UniRule"/>
</dbReference>
<dbReference type="GO" id="GO:0030170">
    <property type="term" value="F:pyridoxal phosphate binding"/>
    <property type="evidence" value="ECO:0007669"/>
    <property type="project" value="InterPro"/>
</dbReference>
<dbReference type="GO" id="GO:0008483">
    <property type="term" value="F:transaminase activity"/>
    <property type="evidence" value="ECO:0007669"/>
    <property type="project" value="InterPro"/>
</dbReference>
<dbReference type="GO" id="GO:0006782">
    <property type="term" value="P:protoporphyrinogen IX biosynthetic process"/>
    <property type="evidence" value="ECO:0007669"/>
    <property type="project" value="UniProtKB-UniRule"/>
</dbReference>
<dbReference type="CDD" id="cd00610">
    <property type="entry name" value="OAT_like"/>
    <property type="match status" value="1"/>
</dbReference>
<dbReference type="FunFam" id="3.40.640.10:FF:000021">
    <property type="entry name" value="Glutamate-1-semialdehyde 2,1-aminomutase"/>
    <property type="match status" value="1"/>
</dbReference>
<dbReference type="Gene3D" id="3.90.1150.10">
    <property type="entry name" value="Aspartate Aminotransferase, domain 1"/>
    <property type="match status" value="1"/>
</dbReference>
<dbReference type="Gene3D" id="3.40.640.10">
    <property type="entry name" value="Type I PLP-dependent aspartate aminotransferase-like (Major domain)"/>
    <property type="match status" value="1"/>
</dbReference>
<dbReference type="HAMAP" id="MF_00375">
    <property type="entry name" value="HemL_aminotrans_3"/>
    <property type="match status" value="1"/>
</dbReference>
<dbReference type="InterPro" id="IPR004639">
    <property type="entry name" value="4pyrrol_synth_GluAld_NH2Trfase"/>
</dbReference>
<dbReference type="InterPro" id="IPR005814">
    <property type="entry name" value="Aminotrans_3"/>
</dbReference>
<dbReference type="InterPro" id="IPR049704">
    <property type="entry name" value="Aminotrans_3_PPA_site"/>
</dbReference>
<dbReference type="InterPro" id="IPR015424">
    <property type="entry name" value="PyrdxlP-dep_Trfase"/>
</dbReference>
<dbReference type="InterPro" id="IPR015421">
    <property type="entry name" value="PyrdxlP-dep_Trfase_major"/>
</dbReference>
<dbReference type="InterPro" id="IPR015422">
    <property type="entry name" value="PyrdxlP-dep_Trfase_small"/>
</dbReference>
<dbReference type="NCBIfam" id="TIGR00713">
    <property type="entry name" value="hemL"/>
    <property type="match status" value="1"/>
</dbReference>
<dbReference type="NCBIfam" id="NF000818">
    <property type="entry name" value="PRK00062.1"/>
    <property type="match status" value="1"/>
</dbReference>
<dbReference type="PANTHER" id="PTHR43713">
    <property type="entry name" value="GLUTAMATE-1-SEMIALDEHYDE 2,1-AMINOMUTASE"/>
    <property type="match status" value="1"/>
</dbReference>
<dbReference type="PANTHER" id="PTHR43713:SF3">
    <property type="entry name" value="GLUTAMATE-1-SEMIALDEHYDE 2,1-AMINOMUTASE 1, CHLOROPLASTIC-RELATED"/>
    <property type="match status" value="1"/>
</dbReference>
<dbReference type="Pfam" id="PF00202">
    <property type="entry name" value="Aminotran_3"/>
    <property type="match status" value="1"/>
</dbReference>
<dbReference type="SUPFAM" id="SSF53383">
    <property type="entry name" value="PLP-dependent transferases"/>
    <property type="match status" value="1"/>
</dbReference>
<dbReference type="PROSITE" id="PS00600">
    <property type="entry name" value="AA_TRANSFER_CLASS_3"/>
    <property type="match status" value="1"/>
</dbReference>
<name>GSA_HERAR</name>
<organism>
    <name type="scientific">Herminiimonas arsenicoxydans</name>
    <dbReference type="NCBI Taxonomy" id="204773"/>
    <lineage>
        <taxon>Bacteria</taxon>
        <taxon>Pseudomonadati</taxon>
        <taxon>Pseudomonadota</taxon>
        <taxon>Betaproteobacteria</taxon>
        <taxon>Burkholderiales</taxon>
        <taxon>Oxalobacteraceae</taxon>
        <taxon>Herminiimonas</taxon>
    </lineage>
</organism>
<reference key="1">
    <citation type="journal article" date="2007" name="PLoS Genet.">
        <title>A tale of two oxidation states: bacterial colonization of arsenic-rich environments.</title>
        <authorList>
            <person name="Muller D."/>
            <person name="Medigue C."/>
            <person name="Koechler S."/>
            <person name="Barbe V."/>
            <person name="Barakat M."/>
            <person name="Talla E."/>
            <person name="Bonnefoy V."/>
            <person name="Krin E."/>
            <person name="Arsene-Ploetze F."/>
            <person name="Carapito C."/>
            <person name="Chandler M."/>
            <person name="Cournoyer B."/>
            <person name="Cruveiller S."/>
            <person name="Dossat C."/>
            <person name="Duval S."/>
            <person name="Heymann M."/>
            <person name="Leize E."/>
            <person name="Lieutaud A."/>
            <person name="Lievremont D."/>
            <person name="Makita Y."/>
            <person name="Mangenot S."/>
            <person name="Nitschke W."/>
            <person name="Ortet P."/>
            <person name="Perdrial N."/>
            <person name="Schoepp B."/>
            <person name="Siguier P."/>
            <person name="Simeonova D.D."/>
            <person name="Rouy Z."/>
            <person name="Segurens B."/>
            <person name="Turlin E."/>
            <person name="Vallenet D."/>
            <person name="van Dorsselaer A."/>
            <person name="Weiss S."/>
            <person name="Weissenbach J."/>
            <person name="Lett M.-C."/>
            <person name="Danchin A."/>
            <person name="Bertin P.N."/>
        </authorList>
    </citation>
    <scope>NUCLEOTIDE SEQUENCE [LARGE SCALE GENOMIC DNA]</scope>
    <source>
        <strain>ULPAs1</strain>
    </source>
</reference>
<sequence length="428" mass="45280">MSSNNEILFARAQKSTPGGVNSPVRAFRSVGGTPRFITRAEGPYFWDADDRRYIDYIGSWGPAIVGHAHPDVVKAVQDAATRGLSFGAPTEGEIRMAELICQLVPSIEQVRLVSSGTEAAMSALRLARGATGRDTIIKFEGCYHGHADSLLVKAGSGLLTFGNPTSAGVPEDFAKHTLVLDYNNPQQLEDTFKEIGNQIACVIVEPVAGNMNLLPATPEFLQTMRRVCTQYGAVLIFDEVMSGFRVALGGAQSMYDIKPDLTVLGKVIGGGLPVAAFGGRTDLMQHLAPLGGVYQAGTLSGNPVTVAAGLATLKLIQVPGFYESLATQTGKLVAGLSAAARAANIAFSANSVGGMFGMYFAAEKPQSYTEMMKCDVAHFNTFFHAMLDAGVYLAPSAFEAGFVSAQHDDAIIEASIQAARQAFAQLGQ</sequence>